<dbReference type="EMBL" id="K01357">
    <property type="status" value="NOT_ANNOTATED_CDS"/>
    <property type="molecule type" value="mRNA"/>
</dbReference>
<dbReference type="PIR" id="A02164">
    <property type="entry name" value="MHRB"/>
</dbReference>
<dbReference type="SMR" id="P03988"/>
<dbReference type="FunCoup" id="P03988">
    <property type="interactions" value="67"/>
</dbReference>
<dbReference type="InParanoid" id="P03988"/>
<dbReference type="Proteomes" id="UP000001811">
    <property type="component" value="Unplaced"/>
</dbReference>
<dbReference type="GO" id="GO:0005576">
    <property type="term" value="C:extracellular region"/>
    <property type="evidence" value="ECO:0007669"/>
    <property type="project" value="UniProtKB-SubCell"/>
</dbReference>
<dbReference type="CDD" id="cd16093">
    <property type="entry name" value="IgC1_CH2_Mu"/>
    <property type="match status" value="1"/>
</dbReference>
<dbReference type="CDD" id="cd05768">
    <property type="entry name" value="IgC1_CH3_IgAGD_CH4_IgAEM"/>
    <property type="match status" value="1"/>
</dbReference>
<dbReference type="FunFam" id="2.60.40.10:FF:000998">
    <property type="entry name" value="Immunoglobulin heavy constant epsilon"/>
    <property type="match status" value="1"/>
</dbReference>
<dbReference type="FunFam" id="2.60.40.10:FF:000463">
    <property type="entry name" value="Immunoglobulin heavy constant gamma 1"/>
    <property type="match status" value="2"/>
</dbReference>
<dbReference type="FunFam" id="2.60.40.10:FF:001836">
    <property type="entry name" value="Immunoglobulin heavy constant mu"/>
    <property type="match status" value="1"/>
</dbReference>
<dbReference type="Gene3D" id="2.60.40.10">
    <property type="entry name" value="Immunoglobulins"/>
    <property type="match status" value="4"/>
</dbReference>
<dbReference type="InterPro" id="IPR007110">
    <property type="entry name" value="Ig-like_dom"/>
</dbReference>
<dbReference type="InterPro" id="IPR036179">
    <property type="entry name" value="Ig-like_dom_sf"/>
</dbReference>
<dbReference type="InterPro" id="IPR013783">
    <property type="entry name" value="Ig-like_fold"/>
</dbReference>
<dbReference type="InterPro" id="IPR003006">
    <property type="entry name" value="Ig/MHC_CS"/>
</dbReference>
<dbReference type="InterPro" id="IPR003597">
    <property type="entry name" value="Ig_C1-set"/>
</dbReference>
<dbReference type="InterPro" id="IPR050380">
    <property type="entry name" value="Immune_Resp_Modulators"/>
</dbReference>
<dbReference type="InterPro" id="IPR013151">
    <property type="entry name" value="Immunoglobulin_dom"/>
</dbReference>
<dbReference type="PANTHER" id="PTHR23411">
    <property type="entry name" value="TAPASIN"/>
    <property type="match status" value="1"/>
</dbReference>
<dbReference type="Pfam" id="PF07654">
    <property type="entry name" value="C1-set"/>
    <property type="match status" value="3"/>
</dbReference>
<dbReference type="Pfam" id="PF00047">
    <property type="entry name" value="ig"/>
    <property type="match status" value="1"/>
</dbReference>
<dbReference type="SMART" id="SM00407">
    <property type="entry name" value="IGc1"/>
    <property type="match status" value="4"/>
</dbReference>
<dbReference type="SUPFAM" id="SSF48726">
    <property type="entry name" value="Immunoglobulin"/>
    <property type="match status" value="4"/>
</dbReference>
<dbReference type="PROSITE" id="PS50835">
    <property type="entry name" value="IG_LIKE"/>
    <property type="match status" value="4"/>
</dbReference>
<dbReference type="PROSITE" id="PS00290">
    <property type="entry name" value="IG_MHC"/>
    <property type="match status" value="3"/>
</dbReference>
<reference key="1">
    <citation type="journal article" date="1984" name="J. Immunol.">
        <title>Complete sequence of a cloned cDNA encoding rabbit secreted mu-chain of VHa2 allotype: comparisons with VHa1 and membrane mu sequences.</title>
        <authorList>
            <person name="Bernstein K.E."/>
            <person name="Alexander C.B."/>
            <person name="Reddy E.P."/>
            <person name="Mage R.G."/>
        </authorList>
    </citation>
    <scope>NUCLEOTIDE SEQUENCE [MRNA] (A2 ALLOTYPE)</scope>
</reference>
<accession>P03988</accession>
<protein>
    <recommendedName>
        <fullName>Ig mu chain C region secreted form</fullName>
    </recommendedName>
</protein>
<organism>
    <name type="scientific">Oryctolagus cuniculus</name>
    <name type="common">Rabbit</name>
    <dbReference type="NCBI Taxonomy" id="9986"/>
    <lineage>
        <taxon>Eukaryota</taxon>
        <taxon>Metazoa</taxon>
        <taxon>Chordata</taxon>
        <taxon>Craniata</taxon>
        <taxon>Vertebrata</taxon>
        <taxon>Euteleostomi</taxon>
        <taxon>Mammalia</taxon>
        <taxon>Eutheria</taxon>
        <taxon>Euarchontoglires</taxon>
        <taxon>Glires</taxon>
        <taxon>Lagomorpha</taxon>
        <taxon>Leporidae</taxon>
        <taxon>Oryctolagus</taxon>
    </lineage>
</organism>
<proteinExistence type="evidence at transcript level"/>
<evidence type="ECO:0000255" key="1"/>
<evidence type="ECO:0000255" key="2">
    <source>
        <dbReference type="PROSITE-ProRule" id="PRU00114"/>
    </source>
</evidence>
<evidence type="ECO:0000305" key="3"/>
<feature type="chain" id="PRO_0000153625" description="Ig mu chain C region secreted form">
    <location>
        <begin position="1" status="less than"/>
        <end position="458"/>
    </location>
</feature>
<feature type="region of interest" description="CH1">
    <location>
        <begin position="1"/>
        <end position="106"/>
    </location>
</feature>
<feature type="region of interest" description="CH2">
    <location>
        <begin position="107"/>
        <end position="222"/>
    </location>
</feature>
<feature type="region of interest" description="CH3">
    <location>
        <begin position="223"/>
        <end position="327"/>
    </location>
</feature>
<feature type="region of interest" description="CH4">
    <location>
        <begin position="328"/>
        <end position="458"/>
    </location>
</feature>
<feature type="glycosylation site" description="N-linked (GlcNAc...) asparagine" evidence="1">
    <location>
        <position position="46"/>
    </location>
</feature>
<feature type="glycosylation site" description="N-linked (GlcNAc...) asparagine" evidence="1">
    <location>
        <position position="114"/>
    </location>
</feature>
<feature type="glycosylation site" description="N-linked (GlcNAc...) asparagine" evidence="1">
    <location>
        <position position="212"/>
    </location>
</feature>
<feature type="glycosylation site" description="N-linked (GlcNAc...) asparagine" evidence="1">
    <location>
        <position position="261"/>
    </location>
</feature>
<feature type="glycosylation site" description="N-linked (GlcNAc...) asparagine" evidence="1">
    <location>
        <position position="277"/>
    </location>
</feature>
<feature type="glycosylation site" description="N-linked (GlcNAc...) asparagine" evidence="1">
    <location>
        <position position="284"/>
    </location>
</feature>
<feature type="glycosylation site" description="N-linked (GlcNAc...) asparagine" evidence="1">
    <location>
        <position position="445"/>
    </location>
</feature>
<feature type="disulfide bond" description="Interchain (with light chain)" evidence="3">
    <location>
        <position position="14"/>
    </location>
</feature>
<feature type="disulfide bond" evidence="2">
    <location>
        <begin position="28"/>
        <end position="90"/>
    </location>
</feature>
<feature type="disulfide bond" evidence="2">
    <location>
        <begin position="137"/>
        <end position="200"/>
    </location>
</feature>
<feature type="disulfide bond" description="Interchain (with heavy chain)" evidence="3">
    <location>
        <position position="219"/>
    </location>
</feature>
<feature type="disulfide bond" evidence="2">
    <location>
        <begin position="249"/>
        <end position="308"/>
    </location>
</feature>
<feature type="disulfide bond" description="Interchain (with heavy chain)" evidence="3">
    <location>
        <position position="296"/>
    </location>
</feature>
<feature type="disulfide bond" evidence="2">
    <location>
        <begin position="356"/>
        <end position="418"/>
    </location>
</feature>
<feature type="non-terminal residue">
    <location>
        <position position="1"/>
    </location>
</feature>
<comment type="subcellular location">
    <subcellularLocation>
        <location evidence="3">Secreted</location>
    </subcellularLocation>
</comment>
<comment type="alternative products">
    <event type="alternative splicing"/>
    <isoform>
        <id>P03988-1</id>
        <name>Secreted</name>
        <sequence type="displayed"/>
    </isoform>
    <isoform>
        <id>P04221-1</id>
        <name>Membrane-bound</name>
        <sequence type="external"/>
    </isoform>
    <text>During differentiation, B-lymphocytes switch from expression of isoform Membrane-bound to isoform Secreted.</text>
</comment>
<keyword id="KW-0025">Alternative splicing</keyword>
<keyword id="KW-1015">Disulfide bond</keyword>
<keyword id="KW-0325">Glycoprotein</keyword>
<keyword id="KW-0393">Immunoglobulin domain</keyword>
<keyword id="KW-1185">Reference proteome</keyword>
<keyword id="KW-0964">Secreted</keyword>
<sequence length="458" mass="49897">VSLSSPTLYPLVSCEGALTDGNLVAMGCLARDFLPSSVTFSWSFKNNSEISSRTVRTFPVVKRGDKYMATSQVLVPSKDVLQGTEEYLVCKVQHSNSNRDLRVSFPVDSELPPNVSVFIPPRDSFSGSGTRKSRLICQATGFSPKQISVSWLRDGQKVESGVLTKPVEAETKGAGPATFSISSMLTITESDWLSQSLYTCRVDHRGIFFDKNVSMSSECSTTPSPGIQVFPIAPSFADTFLSKSARLICLVTDLTTYGSLNISWASHNGKALDTHMNITESHPNATFSAMGEASVCAEDWESGEQFTCTVTHADLPFPLKHTISKSREVAKHPPAVYVLPPAREQLVLRESATVTCLVKGFSPADVFVQWQQRGQPLSSDKYVTSAPAPEPQAPGLYFTHSTLTVTEEDWNSGETFTCVVGHEALPHMVTERTVDKSTGKPTLYNVSLIMSDTASTCY</sequence>
<name>IGHM_RABIT</name>